<accession>O27950</accession>
<sequence length="269" mass="31035">MVWFFEYYDGCGLAIKVKKKLYEAEGVQKVEIYETESMGKMLVIDGKIQLTELDEPFYHEMLVHVPMLSHENPRKVAVIGGGDGGALREVLKHNVERAVLVDIDRNVIDLSRKFLKIDHGAFEDERVEIAIMDGKEFLRDCEIFDVIIVDSTDPVGVSDTLFDREFFELARQKCDVISLQSQSPLIQKEYFRTLLVNSAPFERRDVYLSCVPTYPLALWSFIIGGEYDFSNLEERFERIKGKTVHYNPDVHRAAFALPEWLKKEVEACI</sequence>
<reference key="1">
    <citation type="journal article" date="1997" name="Nature">
        <title>The complete genome sequence of the hyperthermophilic, sulphate-reducing archaeon Archaeoglobus fulgidus.</title>
        <authorList>
            <person name="Klenk H.-P."/>
            <person name="Clayton R.A."/>
            <person name="Tomb J.-F."/>
            <person name="White O."/>
            <person name="Nelson K.E."/>
            <person name="Ketchum K.A."/>
            <person name="Dodson R.J."/>
            <person name="Gwinn M.L."/>
            <person name="Hickey E.K."/>
            <person name="Peterson J.D."/>
            <person name="Richardson D.L."/>
            <person name="Kerlavage A.R."/>
            <person name="Graham D.E."/>
            <person name="Kyrpides N.C."/>
            <person name="Fleischmann R.D."/>
            <person name="Quackenbush J."/>
            <person name="Lee N.H."/>
            <person name="Sutton G.G."/>
            <person name="Gill S.R."/>
            <person name="Kirkness E.F."/>
            <person name="Dougherty B.A."/>
            <person name="McKenney K."/>
            <person name="Adams M.D."/>
            <person name="Loftus B.J."/>
            <person name="Peterson S.N."/>
            <person name="Reich C.I."/>
            <person name="McNeil L.K."/>
            <person name="Badger J.H."/>
            <person name="Glodek A."/>
            <person name="Zhou L."/>
            <person name="Overbeek R."/>
            <person name="Gocayne J.D."/>
            <person name="Weidman J.F."/>
            <person name="McDonald L.A."/>
            <person name="Utterback T.R."/>
            <person name="Cotton M.D."/>
            <person name="Spriggs T."/>
            <person name="Artiach P."/>
            <person name="Kaine B.P."/>
            <person name="Sykes S.M."/>
            <person name="Sadow P.W."/>
            <person name="D'Andrea K.P."/>
            <person name="Bowman C."/>
            <person name="Fujii C."/>
            <person name="Garland S.A."/>
            <person name="Mason T.M."/>
            <person name="Olsen G.J."/>
            <person name="Fraser C.M."/>
            <person name="Smith H.O."/>
            <person name="Woese C.R."/>
            <person name="Venter J.C."/>
        </authorList>
    </citation>
    <scope>NUCLEOTIDE SEQUENCE [LARGE SCALE GENOMIC DNA]</scope>
    <source>
        <strain>ATCC 49558 / DSM 4304 / JCM 9628 / NBRC 100126 / VC-16</strain>
    </source>
</reference>
<organism>
    <name type="scientific">Archaeoglobus fulgidus (strain ATCC 49558 / DSM 4304 / JCM 9628 / NBRC 100126 / VC-16)</name>
    <dbReference type="NCBI Taxonomy" id="224325"/>
    <lineage>
        <taxon>Archaea</taxon>
        <taxon>Methanobacteriati</taxon>
        <taxon>Methanobacteriota</taxon>
        <taxon>Archaeoglobi</taxon>
        <taxon>Archaeoglobales</taxon>
        <taxon>Archaeoglobaceae</taxon>
        <taxon>Archaeoglobus</taxon>
    </lineage>
</organism>
<name>SPEE_ARCFU</name>
<gene>
    <name evidence="1" type="primary">speE</name>
    <name type="ordered locus">AF_2334</name>
</gene>
<dbReference type="EC" id="2.5.1.16" evidence="1"/>
<dbReference type="EMBL" id="AE000782">
    <property type="protein sequence ID" value="AAB88918.1"/>
    <property type="molecule type" value="Genomic_DNA"/>
</dbReference>
<dbReference type="PIR" id="F69541">
    <property type="entry name" value="F69541"/>
</dbReference>
<dbReference type="RefSeq" id="WP_010879823.1">
    <property type="nucleotide sequence ID" value="NC_000917.1"/>
</dbReference>
<dbReference type="SMR" id="O27950"/>
<dbReference type="STRING" id="224325.AF_2334"/>
<dbReference type="PaxDb" id="224325-AF_2334"/>
<dbReference type="EnsemblBacteria" id="AAB88918">
    <property type="protein sequence ID" value="AAB88918"/>
    <property type="gene ID" value="AF_2334"/>
</dbReference>
<dbReference type="GeneID" id="24796099"/>
<dbReference type="KEGG" id="afu:AF_2334"/>
<dbReference type="eggNOG" id="arCOG00050">
    <property type="taxonomic scope" value="Archaea"/>
</dbReference>
<dbReference type="HOGENOM" id="CLU_048199_1_0_2"/>
<dbReference type="OrthoDB" id="10538at2157"/>
<dbReference type="PhylomeDB" id="O27950"/>
<dbReference type="UniPathway" id="UPA00248">
    <property type="reaction ID" value="UER00314"/>
</dbReference>
<dbReference type="Proteomes" id="UP000002199">
    <property type="component" value="Chromosome"/>
</dbReference>
<dbReference type="GO" id="GO:0005829">
    <property type="term" value="C:cytosol"/>
    <property type="evidence" value="ECO:0007669"/>
    <property type="project" value="TreeGrafter"/>
</dbReference>
<dbReference type="GO" id="GO:0004766">
    <property type="term" value="F:spermidine synthase activity"/>
    <property type="evidence" value="ECO:0007669"/>
    <property type="project" value="UniProtKB-UniRule"/>
</dbReference>
<dbReference type="GO" id="GO:0008295">
    <property type="term" value="P:spermidine biosynthetic process"/>
    <property type="evidence" value="ECO:0007669"/>
    <property type="project" value="UniProtKB-UniRule"/>
</dbReference>
<dbReference type="CDD" id="cd02440">
    <property type="entry name" value="AdoMet_MTases"/>
    <property type="match status" value="1"/>
</dbReference>
<dbReference type="Gene3D" id="2.30.140.10">
    <property type="entry name" value="Spermidine synthase, tetramerisation domain"/>
    <property type="match status" value="1"/>
</dbReference>
<dbReference type="Gene3D" id="3.40.50.150">
    <property type="entry name" value="Vaccinia Virus protein VP39"/>
    <property type="match status" value="1"/>
</dbReference>
<dbReference type="HAMAP" id="MF_00198">
    <property type="entry name" value="Spermidine_synth"/>
    <property type="match status" value="1"/>
</dbReference>
<dbReference type="InterPro" id="IPR030374">
    <property type="entry name" value="PABS"/>
</dbReference>
<dbReference type="InterPro" id="IPR030373">
    <property type="entry name" value="PABS_CS"/>
</dbReference>
<dbReference type="InterPro" id="IPR029063">
    <property type="entry name" value="SAM-dependent_MTases_sf"/>
</dbReference>
<dbReference type="InterPro" id="IPR001045">
    <property type="entry name" value="Spermi_synthase"/>
</dbReference>
<dbReference type="InterPro" id="IPR035246">
    <property type="entry name" value="Spermidine_synt_N"/>
</dbReference>
<dbReference type="InterPro" id="IPR037163">
    <property type="entry name" value="Spermidine_synt_N_sf"/>
</dbReference>
<dbReference type="NCBIfam" id="NF002010">
    <property type="entry name" value="PRK00811.1"/>
    <property type="match status" value="1"/>
</dbReference>
<dbReference type="NCBIfam" id="TIGR00417">
    <property type="entry name" value="speE"/>
    <property type="match status" value="1"/>
</dbReference>
<dbReference type="PANTHER" id="PTHR11558:SF11">
    <property type="entry name" value="SPERMIDINE SYNTHASE"/>
    <property type="match status" value="1"/>
</dbReference>
<dbReference type="PANTHER" id="PTHR11558">
    <property type="entry name" value="SPERMIDINE/SPERMINE SYNTHASE"/>
    <property type="match status" value="1"/>
</dbReference>
<dbReference type="Pfam" id="PF17284">
    <property type="entry name" value="Spermine_synt_N"/>
    <property type="match status" value="1"/>
</dbReference>
<dbReference type="Pfam" id="PF01564">
    <property type="entry name" value="Spermine_synth"/>
    <property type="match status" value="1"/>
</dbReference>
<dbReference type="SUPFAM" id="SSF53335">
    <property type="entry name" value="S-adenosyl-L-methionine-dependent methyltransferases"/>
    <property type="match status" value="1"/>
</dbReference>
<dbReference type="PROSITE" id="PS01330">
    <property type="entry name" value="PABS_1"/>
    <property type="match status" value="1"/>
</dbReference>
<dbReference type="PROSITE" id="PS51006">
    <property type="entry name" value="PABS_2"/>
    <property type="match status" value="1"/>
</dbReference>
<proteinExistence type="inferred from homology"/>
<comment type="function">
    <text evidence="1">Catalyzes the irreversible transfer of a propylamine group from the amino donor S-adenosylmethioninamine (decarboxy-AdoMet) to putrescine (1,4-diaminobutane) to yield spermidine.</text>
</comment>
<comment type="catalytic activity">
    <reaction evidence="1">
        <text>S-adenosyl 3-(methylsulfanyl)propylamine + putrescine = S-methyl-5'-thioadenosine + spermidine + H(+)</text>
        <dbReference type="Rhea" id="RHEA:12721"/>
        <dbReference type="ChEBI" id="CHEBI:15378"/>
        <dbReference type="ChEBI" id="CHEBI:17509"/>
        <dbReference type="ChEBI" id="CHEBI:57443"/>
        <dbReference type="ChEBI" id="CHEBI:57834"/>
        <dbReference type="ChEBI" id="CHEBI:326268"/>
        <dbReference type="EC" id="2.5.1.16"/>
    </reaction>
</comment>
<comment type="pathway">
    <text evidence="1">Amine and polyamine biosynthesis; spermidine biosynthesis; spermidine from putrescine: step 1/1.</text>
</comment>
<comment type="subunit">
    <text evidence="1">Homodimer or homotetramer.</text>
</comment>
<comment type="subcellular location">
    <subcellularLocation>
        <location evidence="1">Cytoplasm</location>
    </subcellularLocation>
</comment>
<comment type="similarity">
    <text evidence="1">Belongs to the spermidine/spermine synthase family.</text>
</comment>
<evidence type="ECO:0000255" key="1">
    <source>
        <dbReference type="HAMAP-Rule" id="MF_00198"/>
    </source>
</evidence>
<feature type="chain" id="PRO_0000156525" description="Polyamine aminopropyltransferase">
    <location>
        <begin position="1"/>
        <end position="269"/>
    </location>
</feature>
<feature type="domain" description="PABS" evidence="1">
    <location>
        <begin position="1"/>
        <end position="226"/>
    </location>
</feature>
<feature type="active site" description="Proton acceptor" evidence="1">
    <location>
        <position position="150"/>
    </location>
</feature>
<feature type="binding site" evidence="1">
    <location>
        <position position="28"/>
    </location>
    <ligand>
        <name>S-methyl-5'-thioadenosine</name>
        <dbReference type="ChEBI" id="CHEBI:17509"/>
    </ligand>
</feature>
<feature type="binding site" evidence="1">
    <location>
        <position position="59"/>
    </location>
    <ligand>
        <name>spermidine</name>
        <dbReference type="ChEBI" id="CHEBI:57834"/>
    </ligand>
</feature>
<feature type="binding site" evidence="1">
    <location>
        <position position="83"/>
    </location>
    <ligand>
        <name>spermidine</name>
        <dbReference type="ChEBI" id="CHEBI:57834"/>
    </ligand>
</feature>
<feature type="binding site" evidence="1">
    <location>
        <position position="102"/>
    </location>
    <ligand>
        <name>S-methyl-5'-thioadenosine</name>
        <dbReference type="ChEBI" id="CHEBI:17509"/>
    </ligand>
</feature>
<feature type="binding site" evidence="1">
    <location>
        <begin position="133"/>
        <end position="134"/>
    </location>
    <ligand>
        <name>S-methyl-5'-thioadenosine</name>
        <dbReference type="ChEBI" id="CHEBI:17509"/>
    </ligand>
</feature>
<feature type="binding site" evidence="1">
    <location>
        <begin position="150"/>
        <end position="153"/>
    </location>
    <ligand>
        <name>spermidine</name>
        <dbReference type="ChEBI" id="CHEBI:57834"/>
    </ligand>
</feature>
<keyword id="KW-0963">Cytoplasm</keyword>
<keyword id="KW-0620">Polyamine biosynthesis</keyword>
<keyword id="KW-1185">Reference proteome</keyword>
<keyword id="KW-0745">Spermidine biosynthesis</keyword>
<keyword id="KW-0808">Transferase</keyword>
<protein>
    <recommendedName>
        <fullName evidence="1">Polyamine aminopropyltransferase</fullName>
    </recommendedName>
    <alternativeName>
        <fullName evidence="1">Putrescine aminopropyltransferase</fullName>
        <shortName evidence="1">PAPT</shortName>
    </alternativeName>
    <alternativeName>
        <fullName evidence="1">Spermidine synthase</fullName>
        <shortName evidence="1">SPDS</shortName>
        <shortName evidence="1">SPDSY</shortName>
        <ecNumber evidence="1">2.5.1.16</ecNumber>
    </alternativeName>
</protein>